<dbReference type="EC" id="7.1.1.-" evidence="1"/>
<dbReference type="EMBL" id="BX897700">
    <property type="protein sequence ID" value="CAF26058.1"/>
    <property type="molecule type" value="Genomic_DNA"/>
</dbReference>
<dbReference type="RefSeq" id="WP_011179328.1">
    <property type="nucleotide sequence ID" value="NC_005955.1"/>
</dbReference>
<dbReference type="SMR" id="Q6FZY9"/>
<dbReference type="KEGG" id="bqu:BQ05660"/>
<dbReference type="eggNOG" id="COG0852">
    <property type="taxonomic scope" value="Bacteria"/>
</dbReference>
<dbReference type="HOGENOM" id="CLU_042628_2_1_5"/>
<dbReference type="OrthoDB" id="9803286at2"/>
<dbReference type="Proteomes" id="UP000000597">
    <property type="component" value="Chromosome"/>
</dbReference>
<dbReference type="GO" id="GO:0005886">
    <property type="term" value="C:plasma membrane"/>
    <property type="evidence" value="ECO:0007669"/>
    <property type="project" value="UniProtKB-SubCell"/>
</dbReference>
<dbReference type="GO" id="GO:0008137">
    <property type="term" value="F:NADH dehydrogenase (ubiquinone) activity"/>
    <property type="evidence" value="ECO:0007669"/>
    <property type="project" value="InterPro"/>
</dbReference>
<dbReference type="GO" id="GO:0050136">
    <property type="term" value="F:NADH:ubiquinone reductase (non-electrogenic) activity"/>
    <property type="evidence" value="ECO:0007669"/>
    <property type="project" value="UniProtKB-UniRule"/>
</dbReference>
<dbReference type="GO" id="GO:0048038">
    <property type="term" value="F:quinone binding"/>
    <property type="evidence" value="ECO:0007669"/>
    <property type="project" value="UniProtKB-KW"/>
</dbReference>
<dbReference type="Gene3D" id="3.30.460.80">
    <property type="entry name" value="NADH:ubiquinone oxidoreductase, 30kDa subunit"/>
    <property type="match status" value="1"/>
</dbReference>
<dbReference type="HAMAP" id="MF_01357">
    <property type="entry name" value="NDH1_NuoC"/>
    <property type="match status" value="1"/>
</dbReference>
<dbReference type="InterPro" id="IPR010218">
    <property type="entry name" value="NADH_DH_suC"/>
</dbReference>
<dbReference type="InterPro" id="IPR037232">
    <property type="entry name" value="NADH_quin_OxRdtase_su_C/D-like"/>
</dbReference>
<dbReference type="InterPro" id="IPR001268">
    <property type="entry name" value="NADH_UbQ_OxRdtase_30kDa_su"/>
</dbReference>
<dbReference type="InterPro" id="IPR020396">
    <property type="entry name" value="NADH_UbQ_OxRdtase_CS"/>
</dbReference>
<dbReference type="NCBIfam" id="TIGR01961">
    <property type="entry name" value="NuoC_fam"/>
    <property type="match status" value="1"/>
</dbReference>
<dbReference type="NCBIfam" id="NF004733">
    <property type="entry name" value="PRK06074.1-5"/>
    <property type="match status" value="1"/>
</dbReference>
<dbReference type="PANTHER" id="PTHR10884:SF14">
    <property type="entry name" value="NADH DEHYDROGENASE [UBIQUINONE] IRON-SULFUR PROTEIN 3, MITOCHONDRIAL"/>
    <property type="match status" value="1"/>
</dbReference>
<dbReference type="PANTHER" id="PTHR10884">
    <property type="entry name" value="NADH DEHYDROGENASE UBIQUINONE IRON-SULFUR PROTEIN 3"/>
    <property type="match status" value="1"/>
</dbReference>
<dbReference type="Pfam" id="PF00329">
    <property type="entry name" value="Complex1_30kDa"/>
    <property type="match status" value="1"/>
</dbReference>
<dbReference type="SUPFAM" id="SSF143243">
    <property type="entry name" value="Nqo5-like"/>
    <property type="match status" value="1"/>
</dbReference>
<dbReference type="PROSITE" id="PS00542">
    <property type="entry name" value="COMPLEX1_30K"/>
    <property type="match status" value="1"/>
</dbReference>
<reference key="1">
    <citation type="journal article" date="2004" name="Proc. Natl. Acad. Sci. U.S.A.">
        <title>The louse-borne human pathogen Bartonella quintana is a genomic derivative of the zoonotic agent Bartonella henselae.</title>
        <authorList>
            <person name="Alsmark U.C.M."/>
            <person name="Frank A.C."/>
            <person name="Karlberg E.O."/>
            <person name="Legault B.-A."/>
            <person name="Ardell D.H."/>
            <person name="Canbaeck B."/>
            <person name="Eriksson A.-S."/>
            <person name="Naeslund A.K."/>
            <person name="Handley S.A."/>
            <person name="Huvet M."/>
            <person name="La Scola B."/>
            <person name="Holmberg M."/>
            <person name="Andersson S.G.E."/>
        </authorList>
    </citation>
    <scope>NUCLEOTIDE SEQUENCE [LARGE SCALE GENOMIC DNA]</scope>
    <source>
        <strain>Toulouse</strain>
    </source>
</reference>
<gene>
    <name evidence="1" type="primary">nuoC</name>
    <name type="ordered locus">BQ05660</name>
</gene>
<keyword id="KW-0997">Cell inner membrane</keyword>
<keyword id="KW-1003">Cell membrane</keyword>
<keyword id="KW-0472">Membrane</keyword>
<keyword id="KW-0520">NAD</keyword>
<keyword id="KW-0874">Quinone</keyword>
<keyword id="KW-1278">Translocase</keyword>
<keyword id="KW-0813">Transport</keyword>
<keyword id="KW-0830">Ubiquinone</keyword>
<accession>Q6FZY9</accession>
<feature type="chain" id="PRO_0000358043" description="NADH-quinone oxidoreductase subunit C">
    <location>
        <begin position="1"/>
        <end position="202"/>
    </location>
</feature>
<name>NUOC_BARQU</name>
<proteinExistence type="inferred from homology"/>
<protein>
    <recommendedName>
        <fullName evidence="1">NADH-quinone oxidoreductase subunit C</fullName>
        <ecNumber evidence="1">7.1.1.-</ecNumber>
    </recommendedName>
    <alternativeName>
        <fullName evidence="1">NADH dehydrogenase I subunit C</fullName>
    </alternativeName>
    <alternativeName>
        <fullName evidence="1">NDH-1 subunit C</fullName>
    </alternativeName>
</protein>
<organism>
    <name type="scientific">Bartonella quintana (strain Toulouse)</name>
    <name type="common">Rochalimaea quintana</name>
    <dbReference type="NCBI Taxonomy" id="283165"/>
    <lineage>
        <taxon>Bacteria</taxon>
        <taxon>Pseudomonadati</taxon>
        <taxon>Pseudomonadota</taxon>
        <taxon>Alphaproteobacteria</taxon>
        <taxon>Hyphomicrobiales</taxon>
        <taxon>Bartonellaceae</taxon>
        <taxon>Bartonella</taxon>
    </lineage>
</organism>
<evidence type="ECO:0000255" key="1">
    <source>
        <dbReference type="HAMAP-Rule" id="MF_01357"/>
    </source>
</evidence>
<comment type="function">
    <text evidence="1">NDH-1 shuttles electrons from NADH, via FMN and iron-sulfur (Fe-S) centers, to quinones in the respiratory chain. The immediate electron acceptor for the enzyme in this species is believed to be ubiquinone. Couples the redox reaction to proton translocation (for every two electrons transferred, four hydrogen ions are translocated across the cytoplasmic membrane), and thus conserves the redox energy in a proton gradient.</text>
</comment>
<comment type="catalytic activity">
    <reaction evidence="1">
        <text>a quinone + NADH + 5 H(+)(in) = a quinol + NAD(+) + 4 H(+)(out)</text>
        <dbReference type="Rhea" id="RHEA:57888"/>
        <dbReference type="ChEBI" id="CHEBI:15378"/>
        <dbReference type="ChEBI" id="CHEBI:24646"/>
        <dbReference type="ChEBI" id="CHEBI:57540"/>
        <dbReference type="ChEBI" id="CHEBI:57945"/>
        <dbReference type="ChEBI" id="CHEBI:132124"/>
    </reaction>
</comment>
<comment type="subunit">
    <text evidence="1">NDH-1 is composed of 14 different subunits. Subunits NuoB, C, D, E, F, and G constitute the peripheral sector of the complex.</text>
</comment>
<comment type="subcellular location">
    <subcellularLocation>
        <location evidence="1">Cell inner membrane</location>
        <topology evidence="1">Peripheral membrane protein</topology>
        <orientation evidence="1">Cytoplasmic side</orientation>
    </subcellularLocation>
</comment>
<comment type="similarity">
    <text evidence="1">Belongs to the complex I 30 kDa subunit family.</text>
</comment>
<sequence>MNESLVELSAYLKNKLGDKLEETILAFGELTIVSRLDAITGVLMFVRDDSRCQFINLTDISGVDYPSRDKRFDVSYQLLAPRHNLRLRIKVRTDENTPVASACSIYPGAEWYEREAYDMYGILFSGHPDLRRILTDYGFEGHPLRKDFPVTGFVECRYDNEAKRVIYEPVVLRQEMRNFDFLSPWEGAQYVLPCNEKAEGEK</sequence>